<proteinExistence type="evidence at protein level"/>
<gene>
    <name type="primary">FRMD7</name>
</gene>
<comment type="function">
    <text evidence="1 4 16">Plays a role in neurite development, may be through the activation of the GTPase RAC1. Plays a role in the control of eye movement and gaze stability.</text>
</comment>
<comment type="interaction">
    <interactant intactId="EBI-12325851">
        <id>Q6ZUT3</id>
    </interactant>
    <interactant intactId="EBI-724693">
        <id>P54105</id>
        <label>CLNS1A</label>
    </interactant>
    <organismsDiffer>false</organismsDiffer>
    <experiments>3</experiments>
</comment>
<comment type="subcellular location">
    <subcellularLocation>
        <location evidence="1">Cell projection</location>
        <location evidence="1">Neuron projection</location>
    </subcellularLocation>
    <subcellularLocation>
        <location evidence="1">Cell projection</location>
        <location evidence="1">Growth cone</location>
    </subcellularLocation>
    <text evidence="1">In undifferentiated neurons, located in the actin-rich regions of the cell body. In differentiated neurons, located in the actin-rich regions of the cell body and primary neurite processes but is almost absent from secondary extensions arising from the primary neurite. Also found at the actin-rich distal end of growth cones (By similarity).</text>
</comment>
<comment type="alternative products">
    <event type="alternative splicing"/>
    <isoform>
        <id>Q6ZUT3-1</id>
        <name>1</name>
        <sequence type="displayed"/>
    </isoform>
    <isoform>
        <id>Q6ZUT3-2</id>
        <name>2</name>
        <name>S</name>
        <sequence type="described" ref="VSP_038722"/>
    </isoform>
</comment>
<comment type="tissue specificity">
    <text evidence="4">Expressed in liver, kidney, pancreas and at low levels in brain and heart. Expressed in embryonic brain and developing neural retina.</text>
</comment>
<comment type="developmental stage">
    <text evidence="4 12 13">In 37 day post-ovulation (dpo) embryos, expression is found in the mid- and hindbrain, regions known to be involved in motor control of eye movement, and in the ventricular zone of the forebrain. In 56 dpo embryos, expressed in the ventricular layer of the forebrain, midbrain, cerebellar primordium, spinal cord and the developing neural retina. In later development, highly expressed in postmitotic cells within the developing subplate and cortical plate.</text>
</comment>
<comment type="disease" evidence="4 5 6 7 8 9 10 11 13 14 15 16">
    <disease id="DI-02439">
        <name>Nystagmus 1, congenital, X-linked</name>
        <acronym>NYS1</acronym>
        <description>A form of nystagmus, a condition defined as conjugated, spontaneous and involuntary ocular oscillations that appear at birth or during the first three months of life. Other associated features may include mildly decreased visual acuity, strabismus, astigmatism, and occasionally head nodding.</description>
        <dbReference type="MIM" id="310700"/>
    </disease>
    <text>The disease is caused by variants affecting the gene represented in this entry.</text>
</comment>
<comment type="miscellaneous">
    <molecule>Isoform 2</molecule>
    <text evidence="18">May play a role during neuronal differentiation and development. Shares a similar tissue distribution, co-localize with, and interact with isoform 1 in NT2 cells.</text>
</comment>
<organism>
    <name type="scientific">Homo sapiens</name>
    <name type="common">Human</name>
    <dbReference type="NCBI Taxonomy" id="9606"/>
    <lineage>
        <taxon>Eukaryota</taxon>
        <taxon>Metazoa</taxon>
        <taxon>Chordata</taxon>
        <taxon>Craniata</taxon>
        <taxon>Vertebrata</taxon>
        <taxon>Euteleostomi</taxon>
        <taxon>Mammalia</taxon>
        <taxon>Eutheria</taxon>
        <taxon>Euarchontoglires</taxon>
        <taxon>Primates</taxon>
        <taxon>Haplorrhini</taxon>
        <taxon>Catarrhini</taxon>
        <taxon>Hominidae</taxon>
        <taxon>Homo</taxon>
    </lineage>
</organism>
<keyword id="KW-0025">Alternative splicing</keyword>
<keyword id="KW-0966">Cell projection</keyword>
<keyword id="KW-0175">Coiled coil</keyword>
<keyword id="KW-0225">Disease variant</keyword>
<keyword id="KW-0524">Neurogenesis</keyword>
<keyword id="KW-1267">Proteomics identification</keyword>
<keyword id="KW-1185">Reference proteome</keyword>
<feature type="chain" id="PRO_0000259532" description="FERM domain-containing protein 7">
    <location>
        <begin position="1"/>
        <end position="714"/>
    </location>
</feature>
<feature type="domain" description="FERM" evidence="3">
    <location>
        <begin position="2"/>
        <end position="282"/>
    </location>
</feature>
<feature type="coiled-coil region" evidence="2">
    <location>
        <begin position="537"/>
        <end position="558"/>
    </location>
</feature>
<feature type="splice variant" id="VSP_038722" description="In isoform 2." evidence="17">
    <original>NPKEIVFKFMVKFFPV</original>
    <variation>M</variation>
    <location>
        <begin position="69"/>
        <end position="84"/>
    </location>
</feature>
<feature type="sequence variant" id="VAR_062650" description="In NYS1." evidence="6">
    <location>
        <position position="14"/>
    </location>
</feature>
<feature type="sequence variant" id="VAR_072102" description="In NYS1; dbSNP:rs2124046017." evidence="13">
    <original>F</original>
    <variation>S</variation>
    <location>
        <position position="16"/>
    </location>
</feature>
<feature type="sequence variant" id="VAR_028951" description="In NYS1." evidence="4">
    <original>G</original>
    <variation>E</variation>
    <location>
        <position position="24"/>
    </location>
</feature>
<feature type="sequence variant" id="VAR_028952" description="In NYS1; dbSNP:rs137852210." evidence="4 6 13">
    <original>G</original>
    <variation>R</variation>
    <location>
        <position position="24"/>
    </location>
</feature>
<feature type="sequence variant" id="VAR_062651" description="In NYS1." evidence="11">
    <original>G</original>
    <variation>W</variation>
    <location>
        <position position="24"/>
    </location>
</feature>
<feature type="sequence variant" id="VAR_028953" description="In NYS1; dbSNP:rs137852211." evidence="4 9">
    <original>L</original>
    <variation>R</variation>
    <location>
        <position position="142"/>
    </location>
</feature>
<feature type="sequence variant" id="VAR_062652" description="In NYS1; dbSNP:rs780995406." evidence="6">
    <original>R</original>
    <variation>W</variation>
    <location>
        <position position="146"/>
    </location>
</feature>
<feature type="sequence variant" id="VAR_072103" description="In NYS1." evidence="14">
    <original>H</original>
    <variation>R</variation>
    <location>
        <position position="208"/>
    </location>
</feature>
<feature type="sequence variant" id="VAR_072104" description="In NYS1; decreased RAC1 activity." evidence="16">
    <original>L</original>
    <variation>P</variation>
    <location>
        <position position="212"/>
    </location>
</feature>
<feature type="sequence variant" id="VAR_028954" description="In NYS1." evidence="4">
    <original>N</original>
    <variation>D</variation>
    <location>
        <position position="221"/>
    </location>
</feature>
<feature type="sequence variant" id="VAR_062653" description="In NYS1." evidence="5">
    <original>W</original>
    <variation>G</variation>
    <location>
        <position position="225"/>
    </location>
</feature>
<feature type="sequence variant" id="VAR_028955" description="In NYS1." evidence="4 13">
    <original>A</original>
    <variation>T</variation>
    <location>
        <position position="226"/>
    </location>
</feature>
<feature type="sequence variant" id="VAR_062654" description="In NYS1; dbSNP:rs137852212." evidence="6">
    <original>R</original>
    <variation>C</variation>
    <location>
        <position position="229"/>
    </location>
</feature>
<feature type="sequence variant" id="VAR_062655" description="In NYS1; dbSNP:rs137852212." evidence="8">
    <original>R</original>
    <variation>G</variation>
    <location>
        <position position="229"/>
    </location>
</feature>
<feature type="sequence variant" id="VAR_028956" description="In NYS1; dbSNP:rs387906720." evidence="4 13">
    <original>L</original>
    <variation>V</variation>
    <location>
        <position position="231"/>
    </location>
</feature>
<feature type="sequence variant" id="VAR_062656" description="In NYS1." evidence="7">
    <original>R</original>
    <variation>G</variation>
    <location>
        <position position="261"/>
    </location>
</feature>
<feature type="sequence variant" id="VAR_062657" description="In NYS1; dbSNP:rs1332489637." evidence="11">
    <original>R</original>
    <variation>Q</variation>
    <location>
        <position position="261"/>
    </location>
</feature>
<feature type="sequence variant" id="VAR_028957" description="In NYS1." evidence="4 13">
    <original>A</original>
    <variation>P</variation>
    <location>
        <position position="266"/>
    </location>
</feature>
<feature type="sequence variant" id="VAR_062658" description="In NYS1; dbSNP:rs387906721." evidence="10 11">
    <original>C</original>
    <variation>F</variation>
    <location>
        <position position="271"/>
    </location>
</feature>
<feature type="sequence variant" id="VAR_072105" description="In NYS1." evidence="13">
    <original>C</original>
    <variation>S</variation>
    <location>
        <position position="271"/>
    </location>
</feature>
<feature type="sequence variant" id="VAR_028958" description="In NYS1; dbSNP:rs387906721." evidence="4 13">
    <original>C</original>
    <variation>Y</variation>
    <location>
        <position position="271"/>
    </location>
</feature>
<feature type="sequence variant" id="VAR_062659" description="In NYS1." evidence="5">
    <original>H</original>
    <variation>P</variation>
    <location>
        <position position="275"/>
    </location>
</feature>
<feature type="sequence variant" id="VAR_028959" description="In dbSNP:rs5977625.">
    <original>S</original>
    <variation>L</variation>
    <location>
        <position position="281"/>
    </location>
</feature>
<feature type="sequence variant" id="VAR_062660" description="In NYS1; dbSNP:rs1927846857." evidence="7">
    <original>G</original>
    <variation>R</variation>
    <location>
        <position position="296"/>
    </location>
</feature>
<feature type="sequence variant" id="VAR_028960" description="In NYS1; dbSNP:rs1297486092." evidence="4">
    <original>Y</original>
    <variation>C</variation>
    <location>
        <position position="301"/>
    </location>
</feature>
<feature type="sequence variant" id="VAR_072106" description="In NYS1." evidence="15">
    <original>Q</original>
    <variation>R</variation>
    <location>
        <position position="306"/>
    </location>
</feature>
<feature type="sequence variant" id="VAR_028961" description="In NYS1." evidence="4 13">
    <original>S</original>
    <variation>L</variation>
    <location>
        <position position="340"/>
    </location>
</feature>
<feature type="sequence variant" id="VAR_028962" description="In dbSNP:rs6637934.">
    <original>R</original>
    <variation>H</variation>
    <location>
        <position position="468"/>
    </location>
</feature>
<evidence type="ECO:0000250" key="1">
    <source>
        <dbReference type="UniProtKB" id="A2AD83"/>
    </source>
</evidence>
<evidence type="ECO:0000255" key="2"/>
<evidence type="ECO:0000255" key="3">
    <source>
        <dbReference type="PROSITE-ProRule" id="PRU00084"/>
    </source>
</evidence>
<evidence type="ECO:0000269" key="4">
    <source>
    </source>
</evidence>
<evidence type="ECO:0000269" key="5">
    <source>
    </source>
</evidence>
<evidence type="ECO:0000269" key="6">
    <source>
    </source>
</evidence>
<evidence type="ECO:0000269" key="7">
    <source>
    </source>
</evidence>
<evidence type="ECO:0000269" key="8">
    <source>
    </source>
</evidence>
<evidence type="ECO:0000269" key="9">
    <source>
    </source>
</evidence>
<evidence type="ECO:0000269" key="10">
    <source>
    </source>
</evidence>
<evidence type="ECO:0000269" key="11">
    <source>
    </source>
</evidence>
<evidence type="ECO:0000269" key="12">
    <source>
    </source>
</evidence>
<evidence type="ECO:0000269" key="13">
    <source>
    </source>
</evidence>
<evidence type="ECO:0000269" key="14">
    <source>
    </source>
</evidence>
<evidence type="ECO:0000269" key="15">
    <source>
    </source>
</evidence>
<evidence type="ECO:0000269" key="16">
    <source>
    </source>
</evidence>
<evidence type="ECO:0000303" key="17">
    <source>
    </source>
</evidence>
<evidence type="ECO:0000305" key="18"/>
<accession>Q6ZUT3</accession>
<accession>C0LLJ3</accession>
<accession>Q5JX99</accession>
<protein>
    <recommendedName>
        <fullName>FERM domain-containing protein 7</fullName>
    </recommendedName>
</protein>
<sequence length="714" mass="81614">MLHLKVQFLDDSQKIFVVDQKSSGKALFNLSCSHLNLAEKEYFGLEFCSHSGNNVWLELLKPITKQVKNPKEIVFKFMVKFFPVDPGHLREELTRYLFTLQIKKDLALGRLPCSDNCTALMVSHILQSELGDFHEETDRKHLAQTRYLPNQDCLEGKIMHFHQKHIGRSPAESDILLLDIARKLDMYGIRPHPASDGEGMQIHLAVAHMGVLVLRGNTKINTFNWAKIRKLSFKRKHFLIKLHANILVLCKDTLEFTMASRDACKAFWKTCVEYHAFFRLSEEPKSKPKTLLCSKGSSFRYSGRTQRQLLEYGRKGRLKSLPFERKHYPSQYHERQCRSSPDLLSDVSKQVEDLRLAYGGGYYQNVNGVHASEPVLESRRRNSALEVTFATELEHSKPEADPTLLHQSQSSSSFPFIYMDPVFNTEPNPNPDPRDIFSERSSLSSFQTSCKFSGNHMSIYSGLTSKVRPAKQLTYTDVPYIPCTGQQVGIMPPQVFFYVDKPPQVPRWSPIRAEERTSPHSYVEPTAMKPAERSPRNIRMKSFQQDLQVLQEAIARTSGRSNINVGLEEEDPNLEDAFVCNIQEQTPKRSQSQSDMKTIRFPFGSEFRPLGPCPALSHKADLFTDMFAEQELPAVLMDQSTAERYVASESSDSESEILKPDYYALYGKEIRSPMARIRLSSGSLQLDEEDEDAYFNTPTAEDRTSLKPCNYFLA</sequence>
<reference key="1">
    <citation type="journal article" date="2011" name="Mol. Vis.">
        <title>Identification of a novel FRMD7 splice variant and functional analysis of two FRMD7 transcripts during human NT2 cell differentiation.</title>
        <authorList>
            <person name="Li Y."/>
            <person name="Pu J."/>
            <person name="Liu Z."/>
            <person name="Xu S."/>
            <person name="Jin F."/>
            <person name="Zhu L."/>
            <person name="Tian J."/>
            <person name="Luo J."/>
            <person name="Zhang B."/>
        </authorList>
    </citation>
    <scope>NUCLEOTIDE SEQUENCE [MRNA] (ISOFORM 2)</scope>
    <scope>ALTERNATIVE SPLICING</scope>
</reference>
<reference key="2">
    <citation type="journal article" date="2004" name="Nat. Genet.">
        <title>Complete sequencing and characterization of 21,243 full-length human cDNAs.</title>
        <authorList>
            <person name="Ota T."/>
            <person name="Suzuki Y."/>
            <person name="Nishikawa T."/>
            <person name="Otsuki T."/>
            <person name="Sugiyama T."/>
            <person name="Irie R."/>
            <person name="Wakamatsu A."/>
            <person name="Hayashi K."/>
            <person name="Sato H."/>
            <person name="Nagai K."/>
            <person name="Kimura K."/>
            <person name="Makita H."/>
            <person name="Sekine M."/>
            <person name="Obayashi M."/>
            <person name="Nishi T."/>
            <person name="Shibahara T."/>
            <person name="Tanaka T."/>
            <person name="Ishii S."/>
            <person name="Yamamoto J."/>
            <person name="Saito K."/>
            <person name="Kawai Y."/>
            <person name="Isono Y."/>
            <person name="Nakamura Y."/>
            <person name="Nagahari K."/>
            <person name="Murakami K."/>
            <person name="Yasuda T."/>
            <person name="Iwayanagi T."/>
            <person name="Wagatsuma M."/>
            <person name="Shiratori A."/>
            <person name="Sudo H."/>
            <person name="Hosoiri T."/>
            <person name="Kaku Y."/>
            <person name="Kodaira H."/>
            <person name="Kondo H."/>
            <person name="Sugawara M."/>
            <person name="Takahashi M."/>
            <person name="Kanda K."/>
            <person name="Yokoi T."/>
            <person name="Furuya T."/>
            <person name="Kikkawa E."/>
            <person name="Omura Y."/>
            <person name="Abe K."/>
            <person name="Kamihara K."/>
            <person name="Katsuta N."/>
            <person name="Sato K."/>
            <person name="Tanikawa M."/>
            <person name="Yamazaki M."/>
            <person name="Ninomiya K."/>
            <person name="Ishibashi T."/>
            <person name="Yamashita H."/>
            <person name="Murakawa K."/>
            <person name="Fujimori K."/>
            <person name="Tanai H."/>
            <person name="Kimata M."/>
            <person name="Watanabe M."/>
            <person name="Hiraoka S."/>
            <person name="Chiba Y."/>
            <person name="Ishida S."/>
            <person name="Ono Y."/>
            <person name="Takiguchi S."/>
            <person name="Watanabe S."/>
            <person name="Yosida M."/>
            <person name="Hotuta T."/>
            <person name="Kusano J."/>
            <person name="Kanehori K."/>
            <person name="Takahashi-Fujii A."/>
            <person name="Hara H."/>
            <person name="Tanase T.-O."/>
            <person name="Nomura Y."/>
            <person name="Togiya S."/>
            <person name="Komai F."/>
            <person name="Hara R."/>
            <person name="Takeuchi K."/>
            <person name="Arita M."/>
            <person name="Imose N."/>
            <person name="Musashino K."/>
            <person name="Yuuki H."/>
            <person name="Oshima A."/>
            <person name="Sasaki N."/>
            <person name="Aotsuka S."/>
            <person name="Yoshikawa Y."/>
            <person name="Matsunawa H."/>
            <person name="Ichihara T."/>
            <person name="Shiohata N."/>
            <person name="Sano S."/>
            <person name="Moriya S."/>
            <person name="Momiyama H."/>
            <person name="Satoh N."/>
            <person name="Takami S."/>
            <person name="Terashima Y."/>
            <person name="Suzuki O."/>
            <person name="Nakagawa S."/>
            <person name="Senoh A."/>
            <person name="Mizoguchi H."/>
            <person name="Goto Y."/>
            <person name="Shimizu F."/>
            <person name="Wakebe H."/>
            <person name="Hishigaki H."/>
            <person name="Watanabe T."/>
            <person name="Sugiyama A."/>
            <person name="Takemoto M."/>
            <person name="Kawakami B."/>
            <person name="Yamazaki M."/>
            <person name="Watanabe K."/>
            <person name="Kumagai A."/>
            <person name="Itakura S."/>
            <person name="Fukuzumi Y."/>
            <person name="Fujimori Y."/>
            <person name="Komiyama M."/>
            <person name="Tashiro H."/>
            <person name="Tanigami A."/>
            <person name="Fujiwara T."/>
            <person name="Ono T."/>
            <person name="Yamada K."/>
            <person name="Fujii Y."/>
            <person name="Ozaki K."/>
            <person name="Hirao M."/>
            <person name="Ohmori Y."/>
            <person name="Kawabata A."/>
            <person name="Hikiji T."/>
            <person name="Kobatake N."/>
            <person name="Inagaki H."/>
            <person name="Ikema Y."/>
            <person name="Okamoto S."/>
            <person name="Okitani R."/>
            <person name="Kawakami T."/>
            <person name="Noguchi S."/>
            <person name="Itoh T."/>
            <person name="Shigeta K."/>
            <person name="Senba T."/>
            <person name="Matsumura K."/>
            <person name="Nakajima Y."/>
            <person name="Mizuno T."/>
            <person name="Morinaga M."/>
            <person name="Sasaki M."/>
            <person name="Togashi T."/>
            <person name="Oyama M."/>
            <person name="Hata H."/>
            <person name="Watanabe M."/>
            <person name="Komatsu T."/>
            <person name="Mizushima-Sugano J."/>
            <person name="Satoh T."/>
            <person name="Shirai Y."/>
            <person name="Takahashi Y."/>
            <person name="Nakagawa K."/>
            <person name="Okumura K."/>
            <person name="Nagase T."/>
            <person name="Nomura N."/>
            <person name="Kikuchi H."/>
            <person name="Masuho Y."/>
            <person name="Yamashita R."/>
            <person name="Nakai K."/>
            <person name="Yada T."/>
            <person name="Nakamura Y."/>
            <person name="Ohara O."/>
            <person name="Isogai T."/>
            <person name="Sugano S."/>
        </authorList>
    </citation>
    <scope>NUCLEOTIDE SEQUENCE [LARGE SCALE MRNA] (ISOFORM 1)</scope>
</reference>
<reference key="3">
    <citation type="journal article" date="2005" name="Nature">
        <title>The DNA sequence of the human X chromosome.</title>
        <authorList>
            <person name="Ross M.T."/>
            <person name="Grafham D.V."/>
            <person name="Coffey A.J."/>
            <person name="Scherer S."/>
            <person name="McLay K."/>
            <person name="Muzny D."/>
            <person name="Platzer M."/>
            <person name="Howell G.R."/>
            <person name="Burrows C."/>
            <person name="Bird C.P."/>
            <person name="Frankish A."/>
            <person name="Lovell F.L."/>
            <person name="Howe K.L."/>
            <person name="Ashurst J.L."/>
            <person name="Fulton R.S."/>
            <person name="Sudbrak R."/>
            <person name="Wen G."/>
            <person name="Jones M.C."/>
            <person name="Hurles M.E."/>
            <person name="Andrews T.D."/>
            <person name="Scott C.E."/>
            <person name="Searle S."/>
            <person name="Ramser J."/>
            <person name="Whittaker A."/>
            <person name="Deadman R."/>
            <person name="Carter N.P."/>
            <person name="Hunt S.E."/>
            <person name="Chen R."/>
            <person name="Cree A."/>
            <person name="Gunaratne P."/>
            <person name="Havlak P."/>
            <person name="Hodgson A."/>
            <person name="Metzker M.L."/>
            <person name="Richards S."/>
            <person name="Scott G."/>
            <person name="Steffen D."/>
            <person name="Sodergren E."/>
            <person name="Wheeler D.A."/>
            <person name="Worley K.C."/>
            <person name="Ainscough R."/>
            <person name="Ambrose K.D."/>
            <person name="Ansari-Lari M.A."/>
            <person name="Aradhya S."/>
            <person name="Ashwell R.I."/>
            <person name="Babbage A.K."/>
            <person name="Bagguley C.L."/>
            <person name="Ballabio A."/>
            <person name="Banerjee R."/>
            <person name="Barker G.E."/>
            <person name="Barlow K.F."/>
            <person name="Barrett I.P."/>
            <person name="Bates K.N."/>
            <person name="Beare D.M."/>
            <person name="Beasley H."/>
            <person name="Beasley O."/>
            <person name="Beck A."/>
            <person name="Bethel G."/>
            <person name="Blechschmidt K."/>
            <person name="Brady N."/>
            <person name="Bray-Allen S."/>
            <person name="Bridgeman A.M."/>
            <person name="Brown A.J."/>
            <person name="Brown M.J."/>
            <person name="Bonnin D."/>
            <person name="Bruford E.A."/>
            <person name="Buhay C."/>
            <person name="Burch P."/>
            <person name="Burford D."/>
            <person name="Burgess J."/>
            <person name="Burrill W."/>
            <person name="Burton J."/>
            <person name="Bye J.M."/>
            <person name="Carder C."/>
            <person name="Carrel L."/>
            <person name="Chako J."/>
            <person name="Chapman J.C."/>
            <person name="Chavez D."/>
            <person name="Chen E."/>
            <person name="Chen G."/>
            <person name="Chen Y."/>
            <person name="Chen Z."/>
            <person name="Chinault C."/>
            <person name="Ciccodicola A."/>
            <person name="Clark S.Y."/>
            <person name="Clarke G."/>
            <person name="Clee C.M."/>
            <person name="Clegg S."/>
            <person name="Clerc-Blankenburg K."/>
            <person name="Clifford K."/>
            <person name="Cobley V."/>
            <person name="Cole C.G."/>
            <person name="Conquer J.S."/>
            <person name="Corby N."/>
            <person name="Connor R.E."/>
            <person name="David R."/>
            <person name="Davies J."/>
            <person name="Davis C."/>
            <person name="Davis J."/>
            <person name="Delgado O."/>
            <person name="Deshazo D."/>
            <person name="Dhami P."/>
            <person name="Ding Y."/>
            <person name="Dinh H."/>
            <person name="Dodsworth S."/>
            <person name="Draper H."/>
            <person name="Dugan-Rocha S."/>
            <person name="Dunham A."/>
            <person name="Dunn M."/>
            <person name="Durbin K.J."/>
            <person name="Dutta I."/>
            <person name="Eades T."/>
            <person name="Ellwood M."/>
            <person name="Emery-Cohen A."/>
            <person name="Errington H."/>
            <person name="Evans K.L."/>
            <person name="Faulkner L."/>
            <person name="Francis F."/>
            <person name="Frankland J."/>
            <person name="Fraser A.E."/>
            <person name="Galgoczy P."/>
            <person name="Gilbert J."/>
            <person name="Gill R."/>
            <person name="Gloeckner G."/>
            <person name="Gregory S.G."/>
            <person name="Gribble S."/>
            <person name="Griffiths C."/>
            <person name="Grocock R."/>
            <person name="Gu Y."/>
            <person name="Gwilliam R."/>
            <person name="Hamilton C."/>
            <person name="Hart E.A."/>
            <person name="Hawes A."/>
            <person name="Heath P.D."/>
            <person name="Heitmann K."/>
            <person name="Hennig S."/>
            <person name="Hernandez J."/>
            <person name="Hinzmann B."/>
            <person name="Ho S."/>
            <person name="Hoffs M."/>
            <person name="Howden P.J."/>
            <person name="Huckle E.J."/>
            <person name="Hume J."/>
            <person name="Hunt P.J."/>
            <person name="Hunt A.R."/>
            <person name="Isherwood J."/>
            <person name="Jacob L."/>
            <person name="Johnson D."/>
            <person name="Jones S."/>
            <person name="de Jong P.J."/>
            <person name="Joseph S.S."/>
            <person name="Keenan S."/>
            <person name="Kelly S."/>
            <person name="Kershaw J.K."/>
            <person name="Khan Z."/>
            <person name="Kioschis P."/>
            <person name="Klages S."/>
            <person name="Knights A.J."/>
            <person name="Kosiura A."/>
            <person name="Kovar-Smith C."/>
            <person name="Laird G.K."/>
            <person name="Langford C."/>
            <person name="Lawlor S."/>
            <person name="Leversha M."/>
            <person name="Lewis L."/>
            <person name="Liu W."/>
            <person name="Lloyd C."/>
            <person name="Lloyd D.M."/>
            <person name="Loulseged H."/>
            <person name="Loveland J.E."/>
            <person name="Lovell J.D."/>
            <person name="Lozado R."/>
            <person name="Lu J."/>
            <person name="Lyne R."/>
            <person name="Ma J."/>
            <person name="Maheshwari M."/>
            <person name="Matthews L.H."/>
            <person name="McDowall J."/>
            <person name="McLaren S."/>
            <person name="McMurray A."/>
            <person name="Meidl P."/>
            <person name="Meitinger T."/>
            <person name="Milne S."/>
            <person name="Miner G."/>
            <person name="Mistry S.L."/>
            <person name="Morgan M."/>
            <person name="Morris S."/>
            <person name="Mueller I."/>
            <person name="Mullikin J.C."/>
            <person name="Nguyen N."/>
            <person name="Nordsiek G."/>
            <person name="Nyakatura G."/>
            <person name="O'dell C.N."/>
            <person name="Okwuonu G."/>
            <person name="Palmer S."/>
            <person name="Pandian R."/>
            <person name="Parker D."/>
            <person name="Parrish J."/>
            <person name="Pasternak S."/>
            <person name="Patel D."/>
            <person name="Pearce A.V."/>
            <person name="Pearson D.M."/>
            <person name="Pelan S.E."/>
            <person name="Perez L."/>
            <person name="Porter K.M."/>
            <person name="Ramsey Y."/>
            <person name="Reichwald K."/>
            <person name="Rhodes S."/>
            <person name="Ridler K.A."/>
            <person name="Schlessinger D."/>
            <person name="Schueler M.G."/>
            <person name="Sehra H.K."/>
            <person name="Shaw-Smith C."/>
            <person name="Shen H."/>
            <person name="Sheridan E.M."/>
            <person name="Shownkeen R."/>
            <person name="Skuce C.D."/>
            <person name="Smith M.L."/>
            <person name="Sotheran E.C."/>
            <person name="Steingruber H.E."/>
            <person name="Steward C.A."/>
            <person name="Storey R."/>
            <person name="Swann R.M."/>
            <person name="Swarbreck D."/>
            <person name="Tabor P.E."/>
            <person name="Taudien S."/>
            <person name="Taylor T."/>
            <person name="Teague B."/>
            <person name="Thomas K."/>
            <person name="Thorpe A."/>
            <person name="Timms K."/>
            <person name="Tracey A."/>
            <person name="Trevanion S."/>
            <person name="Tromans A.C."/>
            <person name="d'Urso M."/>
            <person name="Verduzco D."/>
            <person name="Villasana D."/>
            <person name="Waldron L."/>
            <person name="Wall M."/>
            <person name="Wang Q."/>
            <person name="Warren J."/>
            <person name="Warry G.L."/>
            <person name="Wei X."/>
            <person name="West A."/>
            <person name="Whitehead S.L."/>
            <person name="Whiteley M.N."/>
            <person name="Wilkinson J.E."/>
            <person name="Willey D.L."/>
            <person name="Williams G."/>
            <person name="Williams L."/>
            <person name="Williamson A."/>
            <person name="Williamson H."/>
            <person name="Wilming L."/>
            <person name="Woodmansey R.L."/>
            <person name="Wray P.W."/>
            <person name="Yen J."/>
            <person name="Zhang J."/>
            <person name="Zhou J."/>
            <person name="Zoghbi H."/>
            <person name="Zorilla S."/>
            <person name="Buck D."/>
            <person name="Reinhardt R."/>
            <person name="Poustka A."/>
            <person name="Rosenthal A."/>
            <person name="Lehrach H."/>
            <person name="Meindl A."/>
            <person name="Minx P.J."/>
            <person name="Hillier L.W."/>
            <person name="Willard H.F."/>
            <person name="Wilson R.K."/>
            <person name="Waterston R.H."/>
            <person name="Rice C.M."/>
            <person name="Vaudin M."/>
            <person name="Coulson A."/>
            <person name="Nelson D.L."/>
            <person name="Weinstock G."/>
            <person name="Sulston J.E."/>
            <person name="Durbin R.M."/>
            <person name="Hubbard T."/>
            <person name="Gibbs R.A."/>
            <person name="Beck S."/>
            <person name="Rogers J."/>
            <person name="Bentley D.R."/>
        </authorList>
    </citation>
    <scope>NUCLEOTIDE SEQUENCE [LARGE SCALE GENOMIC DNA]</scope>
</reference>
<reference key="4">
    <citation type="journal article" date="2004" name="Genome Res.">
        <title>The status, quality, and expansion of the NIH full-length cDNA project: the Mammalian Gene Collection (MGC).</title>
        <authorList>
            <consortium name="The MGC Project Team"/>
        </authorList>
    </citation>
    <scope>NUCLEOTIDE SEQUENCE [LARGE SCALE MRNA] (ISOFORM 1)</scope>
</reference>
<reference key="5">
    <citation type="journal article" date="2010" name="Hum. Mol. Genet.">
        <title>The nystagmus-associated FRMD7 gene regulates neuronal outgrowth and development.</title>
        <authorList>
            <person name="Betts-Henderson J."/>
            <person name="Bartesaghi S."/>
            <person name="Crosier M."/>
            <person name="Lindsay S."/>
            <person name="Chen H.L."/>
            <person name="Salomoni P."/>
            <person name="Gottlob I."/>
            <person name="Nicotera P."/>
        </authorList>
    </citation>
    <scope>DEVELOPMENTAL STAGE</scope>
</reference>
<reference key="6">
    <citation type="journal article" date="2006" name="Nat. Genet.">
        <title>Mutations in FRMD7, a newly identified member of the FERM family, cause X-linked idiopathic congenital nystagmus.</title>
        <authorList>
            <person name="Tarpey P."/>
            <person name="Thomas S."/>
            <person name="Sarvananthan N."/>
            <person name="Mallya U."/>
            <person name="Lisgo S."/>
            <person name="Talbot C.J."/>
            <person name="Roberts E.O."/>
            <person name="Awan M."/>
            <person name="Surendran M."/>
            <person name="McLean R.J."/>
            <person name="Reinecke R.D."/>
            <person name="Langmann A."/>
            <person name="Lindner S."/>
            <person name="Koch M."/>
            <person name="Jain S."/>
            <person name="Woodruff G."/>
            <person name="Gale R.P."/>
            <person name="Degg C."/>
            <person name="Droutsas K."/>
            <person name="Asproudis I."/>
            <person name="Zubcov A.A."/>
            <person name="Pieh C."/>
            <person name="Veal C.D."/>
            <person name="Machado R.D."/>
            <person name="Backhouse O.C."/>
            <person name="Baumber L."/>
            <person name="Constantinescu C.S."/>
            <person name="Brodsky M.C."/>
            <person name="Hunter D.G."/>
            <person name="Hertle R.W."/>
            <person name="Read R.J."/>
            <person name="Edkins S."/>
            <person name="O'meara S."/>
            <person name="Parker A."/>
            <person name="Stevens C."/>
            <person name="Teague J."/>
            <person name="Wooster R."/>
            <person name="Futreal P.A."/>
            <person name="Trembath R.C."/>
            <person name="Stratton M.R."/>
            <person name="Raymond F.L."/>
            <person name="Gottlob I."/>
        </authorList>
    </citation>
    <scope>INVOLVEMENT IN NYS1</scope>
    <scope>VARIANTS NYS1 ARG-24; GLU-24; ARG-142; ASP-221; THR-226; VAL-231; PRO-266; TYR-271; CYS-301 AND LEU-340</scope>
    <scope>TISSUE SPECIFICITY</scope>
    <scope>FUNCTION</scope>
    <scope>DEVELOPMENTAL STAGE</scope>
</reference>
<reference key="7">
    <citation type="journal article" date="2007" name="Hum. Mutat.">
        <title>Novel mutations in FRMD7 in X-linked congenital nystagmus.</title>
        <authorList>
            <person name="Schorderet D.F."/>
            <person name="Tiab L."/>
            <person name="Gaillard M.C."/>
            <person name="Lorenz B."/>
            <person name="Klainguti G."/>
            <person name="Kerrison J.B."/>
            <person name="Traboulsi E.I."/>
            <person name="Munier F.L."/>
        </authorList>
    </citation>
    <scope>VARIANTS NYS1 GLY-225 AND PRO-275</scope>
</reference>
<reference key="8">
    <citation type="journal article" date="2007" name="Mol. Vis.">
        <title>FRMD7 mutations in Chinese families with X-linked congenital motor nystagmus.</title>
        <authorList>
            <person name="Zhang Q."/>
            <person name="Xiao X."/>
            <person name="Li S."/>
            <person name="Guo X."/>
        </authorList>
    </citation>
    <scope>VARIANTS NYS1 LYS-14 DEL; ARG-24; TRP-146 AND CYS-229</scope>
</reference>
<reference key="9">
    <citation type="journal article" date="2007" name="Mol. Vis.">
        <title>Novel mutations of the FRMD7 gene in X-linked congenital motor nystagmus.</title>
        <authorList>
            <person name="Zhang B."/>
            <person name="Liu Z."/>
            <person name="Zhao G."/>
            <person name="Xie X."/>
            <person name="Yin X."/>
            <person name="Hu Z."/>
            <person name="Xu S."/>
            <person name="Li Q."/>
            <person name="Song F."/>
            <person name="Tian J."/>
            <person name="Luo W."/>
            <person name="Ding M."/>
            <person name="Yin J."/>
            <person name="Xia K."/>
            <person name="Xia J."/>
        </authorList>
    </citation>
    <scope>VARIANTS NYS1 GLY-261 AND ARG-296</scope>
</reference>
<reference key="10">
    <citation type="journal article" date="2007" name="Mol. Vis.">
        <title>X-linked idiopathic infantile nystagmus associated with a missense mutation in FRMD7.</title>
        <authorList>
            <person name="Shiels A."/>
            <person name="Bennett T.M."/>
            <person name="Prince J.B."/>
            <person name="Tychsen L."/>
        </authorList>
    </citation>
    <scope>INVOLVEMENT IN NYS1</scope>
    <scope>VARIANT NYS1 ARG-142</scope>
</reference>
<reference key="11">
    <citation type="journal article" date="2008" name="Br. J. Ophthalmol.">
        <title>Skewed X inactivation in an X linked nystagmus family resulted from a novel, p.R229G, missense mutation in the FRMD7 gene.</title>
        <authorList>
            <person name="Kaplan Y."/>
            <person name="Vargel I."/>
            <person name="Kansu T."/>
            <person name="Akin B."/>
            <person name="Rohmann E."/>
            <person name="Kamaci S."/>
            <person name="Uz E."/>
            <person name="Ozcelik T."/>
            <person name="Wollnik B."/>
            <person name="Akarsu N.A."/>
        </authorList>
    </citation>
    <scope>VARIANT NYS1 GLY-229</scope>
</reference>
<reference key="12">
    <citation type="journal article" date="2008" name="Mol. Vis.">
        <title>A novel mutation in FRMD7 causing X-linked idiopathic congenital nystagmus in a large family.</title>
        <authorList>
            <person name="He X."/>
            <person name="Gu F."/>
            <person name="Wang Y."/>
            <person name="Yan J."/>
            <person name="Zhang M."/>
            <person name="Huang S."/>
            <person name="Ma X."/>
        </authorList>
    </citation>
    <scope>VARIANT NYS1 PHE-271</scope>
</reference>
<reference key="13">
    <citation type="journal article" date="2008" name="Mol. Vis.">
        <title>Five novel mutations of the FRMD7 gene in Chinese families with X-linked infantile nystagmus.</title>
        <authorList>
            <person name="Li N."/>
            <person name="Wang L."/>
            <person name="Cui L."/>
            <person name="Zhang L."/>
            <person name="Dai S."/>
            <person name="Li H."/>
            <person name="Chen X."/>
            <person name="Zhu L."/>
            <person name="Hejtmancik J.F."/>
            <person name="Zhao K."/>
        </authorList>
    </citation>
    <scope>VARIANTS NYS1 TRP-24; GLN-261 AND PHE-271</scope>
</reference>
<reference key="14">
    <citation type="journal article" date="2011" name="Brain">
        <title>The clinical and molecular genetic features of idiopathic infantile periodic alternating nystagmus.</title>
        <authorList>
            <person name="Thomas M.G."/>
            <person name="Crosier M."/>
            <person name="Lindsay S."/>
            <person name="Kumar A."/>
            <person name="Thomas S."/>
            <person name="Araki M."/>
            <person name="Talbot C.J."/>
            <person name="McLean R.J."/>
            <person name="Surendran M."/>
            <person name="Taylor K."/>
            <person name="Leroy B.P."/>
            <person name="Moore A.T."/>
            <person name="Hunter D.G."/>
            <person name="Hertle R.W."/>
            <person name="Tarpey P."/>
            <person name="Langmann A."/>
            <person name="Lindner S."/>
            <person name="Brandner M."/>
            <person name="Gottlob I."/>
        </authorList>
    </citation>
    <scope>INVOLVEMENT IN NYS1</scope>
    <scope>VARIANTS NYS1 SER-16; ARG-24; THR-226; VAL-231; PRO-266; SER-271; TYR-271 AND LEU-340</scope>
    <scope>DEVELOPMENTAL STAGE</scope>
</reference>
<reference key="15">
    <citation type="journal article" date="2011" name="Mol. Vis.">
        <title>Investigation of the gene mutations in two Chinese families with X-linked infantile nystagmus.</title>
        <authorList>
            <person name="Li N."/>
            <person name="Wang X."/>
            <person name="Wang Y."/>
            <person name="Wang L."/>
            <person name="Ying M."/>
            <person name="Han R."/>
            <person name="Liu Y."/>
            <person name="Zhao K."/>
        </authorList>
    </citation>
    <scope>VARIANT NYS1 ARG-208</scope>
</reference>
<reference key="16">
    <citation type="journal article" date="2012" name="Eur. J. Hum. Genet.">
        <title>Novel homozygous, heterozygous and hemizygous FRMD7 gene mutations segregated in the same consanguineous family with congenital X-linked nystagmus.</title>
        <authorList>
            <person name="Radhakrishna U."/>
            <person name="Ratnamala U."/>
            <person name="Deutsch S."/>
            <person name="Bartoloni L."/>
            <person name="Kuracha M.R."/>
            <person name="Singh R."/>
            <person name="Banwait J."/>
            <person name="Bastola D.K."/>
            <person name="Johar K."/>
            <person name="Nath S.K."/>
            <person name="Antonarakis S.E."/>
        </authorList>
    </citation>
    <scope>VARIANT NYS1 ARG-306</scope>
</reference>
<reference key="17">
    <citation type="journal article" date="2013" name="Mol. Vis.">
        <title>A novel missense mutation in the FERM domain containing 7 (FRMD7) gene causing X-linked idiopathic congenital nystagmus in a Chinese family.</title>
        <authorList>
            <person name="Liu Z."/>
            <person name="Mao S."/>
            <person name="Pu J."/>
            <person name="Ding Y."/>
            <person name="Zhang B."/>
            <person name="Ding M."/>
        </authorList>
    </citation>
    <scope>VARIANT NYS1 PRO-212</scope>
    <scope>CHARACTERIZATION OF VARIANT NYS1 PRO-212</scope>
    <scope>FUNCTION</scope>
</reference>
<dbReference type="EMBL" id="FJ717411">
    <property type="protein sequence ID" value="ACN56448.1"/>
    <property type="molecule type" value="mRNA"/>
</dbReference>
<dbReference type="EMBL" id="AK125336">
    <property type="protein sequence ID" value="BAC86135.1"/>
    <property type="molecule type" value="mRNA"/>
</dbReference>
<dbReference type="EMBL" id="AL049792">
    <property type="status" value="NOT_ANNOTATED_CDS"/>
    <property type="molecule type" value="Genomic_DNA"/>
</dbReference>
<dbReference type="EMBL" id="AL109749">
    <property type="status" value="NOT_ANNOTATED_CDS"/>
    <property type="molecule type" value="Genomic_DNA"/>
</dbReference>
<dbReference type="EMBL" id="BC114371">
    <property type="protein sequence ID" value="AAI14372.1"/>
    <property type="molecule type" value="mRNA"/>
</dbReference>
<dbReference type="CCDS" id="CCDS35397.1">
    <molecule id="Q6ZUT3-1"/>
</dbReference>
<dbReference type="CCDS" id="CCDS78504.1">
    <molecule id="Q6ZUT3-2"/>
</dbReference>
<dbReference type="RefSeq" id="NP_001293122.1">
    <molecule id="Q6ZUT3-2"/>
    <property type="nucleotide sequence ID" value="NM_001306193.2"/>
</dbReference>
<dbReference type="RefSeq" id="NP_919253.1">
    <molecule id="Q6ZUT3-1"/>
    <property type="nucleotide sequence ID" value="NM_194277.3"/>
</dbReference>
<dbReference type="SMR" id="Q6ZUT3"/>
<dbReference type="BioGRID" id="124672">
    <property type="interactions" value="3"/>
</dbReference>
<dbReference type="FunCoup" id="Q6ZUT3">
    <property type="interactions" value="2"/>
</dbReference>
<dbReference type="IntAct" id="Q6ZUT3">
    <property type="interactions" value="1"/>
</dbReference>
<dbReference type="STRING" id="9606.ENSP00000298542"/>
<dbReference type="TCDB" id="8.A.25.1.5">
    <property type="family name" value="the ezrin/radixin/moesin (ezrin) family"/>
</dbReference>
<dbReference type="GlyGen" id="Q6ZUT3">
    <property type="glycosylation" value="1 site, 1 O-linked glycan (1 site)"/>
</dbReference>
<dbReference type="iPTMnet" id="Q6ZUT3"/>
<dbReference type="PhosphoSitePlus" id="Q6ZUT3"/>
<dbReference type="BioMuta" id="FRMD7"/>
<dbReference type="DMDM" id="74749680"/>
<dbReference type="jPOST" id="Q6ZUT3"/>
<dbReference type="MassIVE" id="Q6ZUT3"/>
<dbReference type="PaxDb" id="9606-ENSP00000298542"/>
<dbReference type="PeptideAtlas" id="Q6ZUT3"/>
<dbReference type="Antibodypedia" id="430">
    <property type="antibodies" value="97 antibodies from 14 providers"/>
</dbReference>
<dbReference type="DNASU" id="90167"/>
<dbReference type="Ensembl" id="ENST00000298542.9">
    <molecule id="Q6ZUT3-1"/>
    <property type="protein sequence ID" value="ENSP00000298542.3"/>
    <property type="gene ID" value="ENSG00000165694.11"/>
</dbReference>
<dbReference type="Ensembl" id="ENST00000464296.1">
    <molecule id="Q6ZUT3-2"/>
    <property type="protein sequence ID" value="ENSP00000417996.1"/>
    <property type="gene ID" value="ENSG00000165694.11"/>
</dbReference>
<dbReference type="GeneID" id="90167"/>
<dbReference type="KEGG" id="hsa:90167"/>
<dbReference type="MANE-Select" id="ENST00000298542.9">
    <property type="protein sequence ID" value="ENSP00000298542.3"/>
    <property type="RefSeq nucleotide sequence ID" value="NM_194277.3"/>
    <property type="RefSeq protein sequence ID" value="NP_919253.1"/>
</dbReference>
<dbReference type="UCSC" id="uc004ewn.4">
    <molecule id="Q6ZUT3-1"/>
    <property type="organism name" value="human"/>
</dbReference>
<dbReference type="AGR" id="HGNC:8079"/>
<dbReference type="CTD" id="90167"/>
<dbReference type="DisGeNET" id="90167"/>
<dbReference type="GeneCards" id="FRMD7"/>
<dbReference type="GeneReviews" id="FRMD7"/>
<dbReference type="HGNC" id="HGNC:8079">
    <property type="gene designation" value="FRMD7"/>
</dbReference>
<dbReference type="HPA" id="ENSG00000165694">
    <property type="expression patterns" value="Group enriched (endometrium, kidney, smooth muscle)"/>
</dbReference>
<dbReference type="MalaCards" id="FRMD7"/>
<dbReference type="MIM" id="300628">
    <property type="type" value="gene"/>
</dbReference>
<dbReference type="MIM" id="310700">
    <property type="type" value="phenotype"/>
</dbReference>
<dbReference type="neXtProt" id="NX_Q6ZUT3"/>
<dbReference type="OpenTargets" id="ENSG00000165694"/>
<dbReference type="PharmGKB" id="PA162388934"/>
<dbReference type="VEuPathDB" id="HostDB:ENSG00000165694"/>
<dbReference type="eggNOG" id="KOG3531">
    <property type="taxonomic scope" value="Eukaryota"/>
</dbReference>
<dbReference type="GeneTree" id="ENSGT00940000158972"/>
<dbReference type="HOGENOM" id="CLU_030239_0_0_1"/>
<dbReference type="InParanoid" id="Q6ZUT3"/>
<dbReference type="OMA" id="PYIPCTS"/>
<dbReference type="OrthoDB" id="9990815at2759"/>
<dbReference type="PAN-GO" id="Q6ZUT3">
    <property type="GO annotations" value="2 GO annotations based on evolutionary models"/>
</dbReference>
<dbReference type="PhylomeDB" id="Q6ZUT3"/>
<dbReference type="TreeFam" id="TF317513"/>
<dbReference type="PathwayCommons" id="Q6ZUT3"/>
<dbReference type="SignaLink" id="Q6ZUT3"/>
<dbReference type="BioGRID-ORCS" id="90167">
    <property type="hits" value="9 hits in 767 CRISPR screens"/>
</dbReference>
<dbReference type="ChiTaRS" id="FRMD7">
    <property type="organism name" value="human"/>
</dbReference>
<dbReference type="GeneWiki" id="FRMD7"/>
<dbReference type="GenomeRNAi" id="90167"/>
<dbReference type="Pharos" id="Q6ZUT3">
    <property type="development level" value="Tbio"/>
</dbReference>
<dbReference type="PRO" id="PR:Q6ZUT3"/>
<dbReference type="Proteomes" id="UP000005640">
    <property type="component" value="Chromosome X"/>
</dbReference>
<dbReference type="RNAct" id="Q6ZUT3">
    <property type="molecule type" value="protein"/>
</dbReference>
<dbReference type="Bgee" id="ENSG00000165694">
    <property type="expression patterns" value="Expressed in calcaneal tendon and 40 other cell types or tissues"/>
</dbReference>
<dbReference type="ExpressionAtlas" id="Q6ZUT3">
    <property type="expression patterns" value="baseline and differential"/>
</dbReference>
<dbReference type="GO" id="GO:0005856">
    <property type="term" value="C:cytoskeleton"/>
    <property type="evidence" value="ECO:0007669"/>
    <property type="project" value="InterPro"/>
</dbReference>
<dbReference type="GO" id="GO:0005829">
    <property type="term" value="C:cytosol"/>
    <property type="evidence" value="ECO:0000314"/>
    <property type="project" value="HPA"/>
</dbReference>
<dbReference type="GO" id="GO:0005615">
    <property type="term" value="C:extracellular space"/>
    <property type="evidence" value="ECO:0007005"/>
    <property type="project" value="UniProtKB"/>
</dbReference>
<dbReference type="GO" id="GO:0030426">
    <property type="term" value="C:growth cone"/>
    <property type="evidence" value="ECO:0000250"/>
    <property type="project" value="UniProtKB"/>
</dbReference>
<dbReference type="GO" id="GO:0043005">
    <property type="term" value="C:neuron projection"/>
    <property type="evidence" value="ECO:0000250"/>
    <property type="project" value="UniProtKB"/>
</dbReference>
<dbReference type="GO" id="GO:0043025">
    <property type="term" value="C:neuronal cell body"/>
    <property type="evidence" value="ECO:0000250"/>
    <property type="project" value="UniProtKB"/>
</dbReference>
<dbReference type="GO" id="GO:0005654">
    <property type="term" value="C:nucleoplasm"/>
    <property type="evidence" value="ECO:0000314"/>
    <property type="project" value="HPA"/>
</dbReference>
<dbReference type="GO" id="GO:0005886">
    <property type="term" value="C:plasma membrane"/>
    <property type="evidence" value="ECO:0000314"/>
    <property type="project" value="HPA"/>
</dbReference>
<dbReference type="GO" id="GO:0051497">
    <property type="term" value="P:negative regulation of stress fiber assembly"/>
    <property type="evidence" value="ECO:0007669"/>
    <property type="project" value="Ensembl"/>
</dbReference>
<dbReference type="GO" id="GO:0007399">
    <property type="term" value="P:nervous system development"/>
    <property type="evidence" value="ECO:0007669"/>
    <property type="project" value="UniProtKB-KW"/>
</dbReference>
<dbReference type="GO" id="GO:0010592">
    <property type="term" value="P:positive regulation of lamellipodium assembly"/>
    <property type="evidence" value="ECO:0007669"/>
    <property type="project" value="Ensembl"/>
</dbReference>
<dbReference type="GO" id="GO:0051057">
    <property type="term" value="P:positive regulation of small GTPase mediated signal transduction"/>
    <property type="evidence" value="ECO:0007669"/>
    <property type="project" value="Ensembl"/>
</dbReference>
<dbReference type="GO" id="GO:0010975">
    <property type="term" value="P:regulation of neuron projection development"/>
    <property type="evidence" value="ECO:0000250"/>
    <property type="project" value="UniProtKB"/>
</dbReference>
<dbReference type="CDD" id="cd14473">
    <property type="entry name" value="FERM_B-lobe"/>
    <property type="match status" value="1"/>
</dbReference>
<dbReference type="CDD" id="cd13193">
    <property type="entry name" value="FERM_C_FARP1-like"/>
    <property type="match status" value="1"/>
</dbReference>
<dbReference type="CDD" id="cd17188">
    <property type="entry name" value="FERM_F1_FRMD7"/>
    <property type="match status" value="1"/>
</dbReference>
<dbReference type="FunFam" id="2.30.29.30:FF:000002">
    <property type="entry name" value="Band 4.1-like protein 5 isoform 1"/>
    <property type="match status" value="1"/>
</dbReference>
<dbReference type="FunFam" id="3.10.20.90:FF:000040">
    <property type="entry name" value="FERM, RhoGEF and pleckstrin domain-containing protein"/>
    <property type="match status" value="1"/>
</dbReference>
<dbReference type="FunFam" id="1.20.80.10:FF:000005">
    <property type="entry name" value="FERM, RhoGEF and pleckstrin domain-containing protein 1"/>
    <property type="match status" value="1"/>
</dbReference>
<dbReference type="Gene3D" id="1.20.80.10">
    <property type="match status" value="1"/>
</dbReference>
<dbReference type="Gene3D" id="3.10.20.90">
    <property type="entry name" value="Phosphatidylinositol 3-kinase Catalytic Subunit, Chain A, domain 1"/>
    <property type="match status" value="1"/>
</dbReference>
<dbReference type="Gene3D" id="2.30.29.30">
    <property type="entry name" value="Pleckstrin-homology domain (PH domain)/Phosphotyrosine-binding domain (PTB)"/>
    <property type="match status" value="1"/>
</dbReference>
<dbReference type="InterPro" id="IPR019749">
    <property type="entry name" value="Band_41_domain"/>
</dbReference>
<dbReference type="InterPro" id="IPR014847">
    <property type="entry name" value="FA"/>
</dbReference>
<dbReference type="InterPro" id="IPR041788">
    <property type="entry name" value="FARP1/FARP2/FRMD7_FERM_C"/>
</dbReference>
<dbReference type="InterPro" id="IPR014352">
    <property type="entry name" value="FERM/acyl-CoA-bd_prot_sf"/>
</dbReference>
<dbReference type="InterPro" id="IPR035963">
    <property type="entry name" value="FERM_2"/>
</dbReference>
<dbReference type="InterPro" id="IPR019748">
    <property type="entry name" value="FERM_central"/>
</dbReference>
<dbReference type="InterPro" id="IPR019747">
    <property type="entry name" value="FERM_CS"/>
</dbReference>
<dbReference type="InterPro" id="IPR000299">
    <property type="entry name" value="FERM_domain"/>
</dbReference>
<dbReference type="InterPro" id="IPR018979">
    <property type="entry name" value="FERM_N"/>
</dbReference>
<dbReference type="InterPro" id="IPR018980">
    <property type="entry name" value="FERM_PH-like_C"/>
</dbReference>
<dbReference type="InterPro" id="IPR011993">
    <property type="entry name" value="PH-like_dom_sf"/>
</dbReference>
<dbReference type="InterPro" id="IPR051835">
    <property type="entry name" value="RAC1-GEF"/>
</dbReference>
<dbReference type="InterPro" id="IPR029071">
    <property type="entry name" value="Ubiquitin-like_domsf"/>
</dbReference>
<dbReference type="PANTHER" id="PTHR45858">
    <property type="entry name" value="FERM DOMAIN CONTAINING PROTEIN"/>
    <property type="match status" value="1"/>
</dbReference>
<dbReference type="PANTHER" id="PTHR45858:SF1">
    <property type="entry name" value="FERM DOMAIN-CONTAINING PROTEIN 7"/>
    <property type="match status" value="1"/>
</dbReference>
<dbReference type="Pfam" id="PF08736">
    <property type="entry name" value="FA"/>
    <property type="match status" value="1"/>
</dbReference>
<dbReference type="Pfam" id="PF09380">
    <property type="entry name" value="FERM_C"/>
    <property type="match status" value="1"/>
</dbReference>
<dbReference type="Pfam" id="PF00373">
    <property type="entry name" value="FERM_M"/>
    <property type="match status" value="1"/>
</dbReference>
<dbReference type="Pfam" id="PF09379">
    <property type="entry name" value="FERM_N"/>
    <property type="match status" value="1"/>
</dbReference>
<dbReference type="PRINTS" id="PR00935">
    <property type="entry name" value="BAND41"/>
</dbReference>
<dbReference type="SMART" id="SM00295">
    <property type="entry name" value="B41"/>
    <property type="match status" value="1"/>
</dbReference>
<dbReference type="SMART" id="SM01195">
    <property type="entry name" value="FA"/>
    <property type="match status" value="1"/>
</dbReference>
<dbReference type="SMART" id="SM01196">
    <property type="entry name" value="FERM_C"/>
    <property type="match status" value="1"/>
</dbReference>
<dbReference type="SUPFAM" id="SSF50729">
    <property type="entry name" value="PH domain-like"/>
    <property type="match status" value="1"/>
</dbReference>
<dbReference type="SUPFAM" id="SSF47031">
    <property type="entry name" value="Second domain of FERM"/>
    <property type="match status" value="1"/>
</dbReference>
<dbReference type="SUPFAM" id="SSF54236">
    <property type="entry name" value="Ubiquitin-like"/>
    <property type="match status" value="1"/>
</dbReference>
<dbReference type="PROSITE" id="PS00660">
    <property type="entry name" value="FERM_1"/>
    <property type="match status" value="1"/>
</dbReference>
<dbReference type="PROSITE" id="PS50057">
    <property type="entry name" value="FERM_3"/>
    <property type="match status" value="1"/>
</dbReference>
<name>FRMD7_HUMAN</name>